<gene>
    <name evidence="1" type="primary">moaC</name>
    <name type="ordered locus">SbBS512_E2569</name>
</gene>
<keyword id="KW-0456">Lyase</keyword>
<keyword id="KW-0501">Molybdenum cofactor biosynthesis</keyword>
<keyword id="KW-1185">Reference proteome</keyword>
<reference key="1">
    <citation type="submission" date="2008-05" db="EMBL/GenBank/DDBJ databases">
        <title>Complete sequence of Shigella boydii serotype 18 strain BS512.</title>
        <authorList>
            <person name="Rasko D.A."/>
            <person name="Rosovitz M."/>
            <person name="Maurelli A.T."/>
            <person name="Myers G."/>
            <person name="Seshadri R."/>
            <person name="Cer R."/>
            <person name="Jiang L."/>
            <person name="Ravel J."/>
            <person name="Sebastian Y."/>
        </authorList>
    </citation>
    <scope>NUCLEOTIDE SEQUENCE [LARGE SCALE GENOMIC DNA]</scope>
    <source>
        <strain>CDC 3083-94 / BS512</strain>
    </source>
</reference>
<sequence>MSQLTHINAAGEAHMVDVSAKAETVREARAEAFVTMRSETLAMIIDGRHHKGDVFATARIAGIQAAKRTWDLIPLCHPLMLSKVEVNLQAEPEHNRVRIETLCRLTGKTGVEMEALTAASVAALTIYDMCKAVQKDMVIGPVRLLAKSGGKSGDFKVEADD</sequence>
<feature type="chain" id="PRO_1000139299" description="Cyclic pyranopterin monophosphate synthase">
    <location>
        <begin position="1"/>
        <end position="161"/>
    </location>
</feature>
<feature type="active site" evidence="1">
    <location>
        <position position="128"/>
    </location>
</feature>
<feature type="binding site" evidence="1">
    <location>
        <begin position="75"/>
        <end position="77"/>
    </location>
    <ligand>
        <name>substrate</name>
    </ligand>
</feature>
<feature type="binding site" evidence="1">
    <location>
        <begin position="113"/>
        <end position="114"/>
    </location>
    <ligand>
        <name>substrate</name>
    </ligand>
</feature>
<comment type="function">
    <text evidence="1">Catalyzes the conversion of (8S)-3',8-cyclo-7,8-dihydroguanosine 5'-triphosphate to cyclic pyranopterin monophosphate (cPMP).</text>
</comment>
<comment type="catalytic activity">
    <reaction evidence="1">
        <text>(8S)-3',8-cyclo-7,8-dihydroguanosine 5'-triphosphate = cyclic pyranopterin phosphate + diphosphate</text>
        <dbReference type="Rhea" id="RHEA:49580"/>
        <dbReference type="ChEBI" id="CHEBI:33019"/>
        <dbReference type="ChEBI" id="CHEBI:59648"/>
        <dbReference type="ChEBI" id="CHEBI:131766"/>
        <dbReference type="EC" id="4.6.1.17"/>
    </reaction>
</comment>
<comment type="pathway">
    <text evidence="1">Cofactor biosynthesis; molybdopterin biosynthesis.</text>
</comment>
<comment type="subunit">
    <text evidence="1">Homohexamer; trimer of dimers.</text>
</comment>
<comment type="similarity">
    <text evidence="1">Belongs to the MoaC family.</text>
</comment>
<accession>B2TVE7</accession>
<protein>
    <recommendedName>
        <fullName evidence="1">Cyclic pyranopterin monophosphate synthase</fullName>
        <ecNumber evidence="1">4.6.1.17</ecNumber>
    </recommendedName>
    <alternativeName>
        <fullName evidence="1">Molybdenum cofactor biosynthesis protein C</fullName>
    </alternativeName>
</protein>
<organism>
    <name type="scientific">Shigella boydii serotype 18 (strain CDC 3083-94 / BS512)</name>
    <dbReference type="NCBI Taxonomy" id="344609"/>
    <lineage>
        <taxon>Bacteria</taxon>
        <taxon>Pseudomonadati</taxon>
        <taxon>Pseudomonadota</taxon>
        <taxon>Gammaproteobacteria</taxon>
        <taxon>Enterobacterales</taxon>
        <taxon>Enterobacteriaceae</taxon>
        <taxon>Shigella</taxon>
    </lineage>
</organism>
<evidence type="ECO:0000255" key="1">
    <source>
        <dbReference type="HAMAP-Rule" id="MF_01224"/>
    </source>
</evidence>
<proteinExistence type="inferred from homology"/>
<name>MOAC_SHIB3</name>
<dbReference type="EC" id="4.6.1.17" evidence="1"/>
<dbReference type="EMBL" id="CP001063">
    <property type="protein sequence ID" value="ACD08938.1"/>
    <property type="molecule type" value="Genomic_DNA"/>
</dbReference>
<dbReference type="RefSeq" id="WP_000080885.1">
    <property type="nucleotide sequence ID" value="NC_010658.1"/>
</dbReference>
<dbReference type="SMR" id="B2TVE7"/>
<dbReference type="STRING" id="344609.SbBS512_E2569"/>
<dbReference type="GeneID" id="86945666"/>
<dbReference type="KEGG" id="sbc:SbBS512_E2569"/>
<dbReference type="HOGENOM" id="CLU_074693_1_1_6"/>
<dbReference type="UniPathway" id="UPA00344"/>
<dbReference type="Proteomes" id="UP000001030">
    <property type="component" value="Chromosome"/>
</dbReference>
<dbReference type="GO" id="GO:0061799">
    <property type="term" value="F:cyclic pyranopterin monophosphate synthase activity"/>
    <property type="evidence" value="ECO:0007669"/>
    <property type="project" value="UniProtKB-UniRule"/>
</dbReference>
<dbReference type="GO" id="GO:0006777">
    <property type="term" value="P:Mo-molybdopterin cofactor biosynthetic process"/>
    <property type="evidence" value="ECO:0007669"/>
    <property type="project" value="UniProtKB-UniRule"/>
</dbReference>
<dbReference type="CDD" id="cd01420">
    <property type="entry name" value="MoaC_PE"/>
    <property type="match status" value="1"/>
</dbReference>
<dbReference type="FunFam" id="3.30.70.640:FF:000001">
    <property type="entry name" value="Cyclic pyranopterin monophosphate synthase"/>
    <property type="match status" value="1"/>
</dbReference>
<dbReference type="Gene3D" id="3.30.70.640">
    <property type="entry name" value="Molybdopterin cofactor biosynthesis C (MoaC) domain"/>
    <property type="match status" value="1"/>
</dbReference>
<dbReference type="HAMAP" id="MF_01224_B">
    <property type="entry name" value="MoaC_B"/>
    <property type="match status" value="1"/>
</dbReference>
<dbReference type="InterPro" id="IPR023045">
    <property type="entry name" value="MoaC"/>
</dbReference>
<dbReference type="InterPro" id="IPR047594">
    <property type="entry name" value="MoaC_bact/euk"/>
</dbReference>
<dbReference type="InterPro" id="IPR036522">
    <property type="entry name" value="MoaC_sf"/>
</dbReference>
<dbReference type="InterPro" id="IPR050105">
    <property type="entry name" value="MoCo_biosynth_MoaA/MoaC"/>
</dbReference>
<dbReference type="InterPro" id="IPR002820">
    <property type="entry name" value="Mopterin_CF_biosynth-C_dom"/>
</dbReference>
<dbReference type="NCBIfam" id="TIGR00581">
    <property type="entry name" value="moaC"/>
    <property type="match status" value="1"/>
</dbReference>
<dbReference type="NCBIfam" id="NF006870">
    <property type="entry name" value="PRK09364.1"/>
    <property type="match status" value="1"/>
</dbReference>
<dbReference type="PANTHER" id="PTHR22960">
    <property type="entry name" value="MOLYBDOPTERIN COFACTOR SYNTHESIS PROTEIN A"/>
    <property type="match status" value="1"/>
</dbReference>
<dbReference type="Pfam" id="PF01967">
    <property type="entry name" value="MoaC"/>
    <property type="match status" value="1"/>
</dbReference>
<dbReference type="SUPFAM" id="SSF55040">
    <property type="entry name" value="Molybdenum cofactor biosynthesis protein C, MoaC"/>
    <property type="match status" value="1"/>
</dbReference>